<name>TX21A_RHYMT</name>
<accession>A0A8U0LTT7</accession>
<dbReference type="EMBL" id="MW317123">
    <property type="protein sequence ID" value="UPH34156.1"/>
    <property type="molecule type" value="mRNA"/>
</dbReference>
<dbReference type="SMR" id="A0A8U0LTT7"/>
<dbReference type="GO" id="GO:0005576">
    <property type="term" value="C:extracellular region"/>
    <property type="evidence" value="ECO:0007669"/>
    <property type="project" value="UniProtKB-SubCell"/>
</dbReference>
<dbReference type="GO" id="GO:0090729">
    <property type="term" value="F:toxin activity"/>
    <property type="evidence" value="ECO:0007669"/>
    <property type="project" value="UniProtKB-KW"/>
</dbReference>
<dbReference type="Gene3D" id="2.10.25.10">
    <property type="entry name" value="Laminin"/>
    <property type="match status" value="1"/>
</dbReference>
<dbReference type="SUPFAM" id="SSF57196">
    <property type="entry name" value="EGF/Laminin"/>
    <property type="match status" value="1"/>
</dbReference>
<dbReference type="PROSITE" id="PS00022">
    <property type="entry name" value="EGF_1"/>
    <property type="match status" value="1"/>
</dbReference>
<keyword id="KW-1015">Disulfide bond</keyword>
<keyword id="KW-0245">EGF-like domain</keyword>
<keyword id="KW-0528">Neurotoxin</keyword>
<keyword id="KW-0964">Secreted</keyword>
<keyword id="KW-0732">Signal</keyword>
<keyword id="KW-0800">Toxin</keyword>
<proteinExistence type="inferred from homology"/>
<protein>
    <recommendedName>
        <fullName evidence="4">OMEGA-ectatommitoxin(02)-Rm1a</fullName>
        <shortName evidence="3">ECTX2-Rm1a</shortName>
        <shortName evidence="4">OMEGA-ECTX2-Rm1a</shortName>
    </recommendedName>
</protein>
<evidence type="ECO:0000250" key="1">
    <source>
        <dbReference type="UniProtKB" id="P0DQX9"/>
    </source>
</evidence>
<evidence type="ECO:0000250" key="2">
    <source>
        <dbReference type="UniProtKB" id="P0DSL4"/>
    </source>
</evidence>
<evidence type="ECO:0000303" key="3">
    <source>
    </source>
</evidence>
<evidence type="ECO:0000305" key="4"/>
<sequence>MKDSYISIVIAYLMVTFILVSSMPIEGEKGELGPHRLPCPPEYANYCFNGKCVHVVAQDEPGKPCYSCICDKFYIGKRCGTLDLTNPDF</sequence>
<feature type="signal peptide" evidence="2">
    <location>
        <begin position="1"/>
        <end position="30"/>
    </location>
</feature>
<feature type="chain" id="PRO_0000457846" description="OMEGA-ectatommitoxin(02)-Rm1a">
    <location>
        <begin position="31"/>
        <end position="89"/>
    </location>
</feature>
<feature type="domain" description="EGF-like" evidence="1 4">
    <location>
        <begin position="43"/>
        <end position="80"/>
    </location>
</feature>
<feature type="disulfide bond" evidence="2">
    <location>
        <begin position="39"/>
        <end position="52"/>
    </location>
</feature>
<feature type="disulfide bond" evidence="2">
    <location>
        <begin position="47"/>
        <end position="68"/>
    </location>
</feature>
<feature type="disulfide bond" evidence="2">
    <location>
        <begin position="70"/>
        <end position="79"/>
    </location>
</feature>
<organism>
    <name type="scientific">Rhytidoponera metallica</name>
    <name type="common">Australian green-headed ant</name>
    <name type="synonym">Ponera metallica</name>
    <dbReference type="NCBI Taxonomy" id="148364"/>
    <lineage>
        <taxon>Eukaryota</taxon>
        <taxon>Metazoa</taxon>
        <taxon>Ecdysozoa</taxon>
        <taxon>Arthropoda</taxon>
        <taxon>Hexapoda</taxon>
        <taxon>Insecta</taxon>
        <taxon>Pterygota</taxon>
        <taxon>Neoptera</taxon>
        <taxon>Endopterygota</taxon>
        <taxon>Hymenoptera</taxon>
        <taxon>Apocrita</taxon>
        <taxon>Aculeata</taxon>
        <taxon>Formicoidea</taxon>
        <taxon>Formicidae</taxon>
        <taxon>Ectatomminae</taxon>
        <taxon>Ectatommini</taxon>
        <taxon>Rhytidoponera</taxon>
    </lineage>
</organism>
<reference key="1">
    <citation type="journal article" date="2022" name="Proc. Natl. Acad. Sci. U.S.A.">
        <title>A peptide toxin in ant venom mimics vertebrate EGF-like hormones to cause long-lasting hypersensitivity in mammals.</title>
        <authorList>
            <person name="Eagles D.A."/>
            <person name="Saez N.J."/>
            <person name="Krishnarjuna B."/>
            <person name="Bradford J.J."/>
            <person name="Chin Y.K."/>
            <person name="Starobova H."/>
            <person name="Mueller A."/>
            <person name="Reichelt M.E."/>
            <person name="Undheim E.A.B."/>
            <person name="Norton R.S."/>
            <person name="Thomas W.G."/>
            <person name="Vetter I."/>
            <person name="King G.F."/>
            <person name="Robinson S.D."/>
        </authorList>
    </citation>
    <scope>NUCLEOTIDE SEQUENCE [MRNA]</scope>
    <source>
        <tissue>Venom gland</tissue>
    </source>
</reference>
<comment type="function">
    <text evidence="2">Ant peptide with probable defensive activity which acts as a potent agonist of the mammalian epidermal growth factor receptor (EGFR). Mimics, both structurally and functionally, vertebrate epidermal growth factor (EGF) peptide hormones. In vivo, intraplantar injection in mice causes long-lasting (several days) hypersensitivity of the injected paw to both mechanical and thermal stimuli. Its long-lasting effect is unusual for venom toxins whose effects are usually immediate. One possible explanation is that it would reduce the duration of a nest attack, discourage future attacks, or enhance the actions of subsequent exposure to other pain-inducing venom peptides.</text>
</comment>
<comment type="subcellular location">
    <subcellularLocation>
        <location evidence="2">Secreted</location>
    </subcellularLocation>
</comment>
<comment type="tissue specificity">
    <text evidence="2">Expressed by the venom gland.</text>
</comment>
<comment type="similarity">
    <text evidence="4">Belongs to the EGF domain peptide family.</text>
</comment>